<sequence>MMEEIDRFQVPTAHSEMQPLDPTAASISDGDCDAREEKQRELARKGSLKNGSMGSPVNQQPKKNNVMARTRLVVPNKGYSSLDQSPDEKPLVALDTDSDDDFDMSRYSSSGYSSAEQINQDLNIQLLKDGYRLDEIPDDEDLDLIPPSQVSPCSLIYFQEGVWKT</sequence>
<name>F219A_MACFA</name>
<evidence type="ECO:0000250" key="1">
    <source>
        <dbReference type="UniProtKB" id="Q8IW50"/>
    </source>
</evidence>
<evidence type="ECO:0000250" key="2">
    <source>
        <dbReference type="UniProtKB" id="Q9D772"/>
    </source>
</evidence>
<evidence type="ECO:0000256" key="3">
    <source>
        <dbReference type="SAM" id="MobiDB-lite"/>
    </source>
</evidence>
<evidence type="ECO:0000305" key="4"/>
<gene>
    <name type="primary">FAM219A</name>
    <name type="ORF">QflA-14405</name>
</gene>
<protein>
    <recommendedName>
        <fullName>Protein FAM219A</fullName>
    </recommendedName>
</protein>
<feature type="chain" id="PRO_0000089677" description="Protein FAM219A">
    <location>
        <begin position="1"/>
        <end position="165"/>
    </location>
</feature>
<feature type="region of interest" description="Disordered" evidence="3">
    <location>
        <begin position="1"/>
        <end position="114"/>
    </location>
</feature>
<feature type="compositionally biased region" description="Basic and acidic residues" evidence="3">
    <location>
        <begin position="32"/>
        <end position="44"/>
    </location>
</feature>
<feature type="compositionally biased region" description="Polar residues" evidence="3">
    <location>
        <begin position="49"/>
        <end position="63"/>
    </location>
</feature>
<feature type="compositionally biased region" description="Low complexity" evidence="3">
    <location>
        <begin position="105"/>
        <end position="114"/>
    </location>
</feature>
<feature type="modified residue" description="N-acetylmethionine" evidence="1">
    <location>
        <position position="1"/>
    </location>
</feature>
<feature type="modified residue" description="Phosphoserine" evidence="2">
    <location>
        <position position="55"/>
    </location>
</feature>
<feature type="modified residue" description="Phosphoserine" evidence="1">
    <location>
        <position position="85"/>
    </location>
</feature>
<feature type="modified residue" description="Phosphothreonine" evidence="1">
    <location>
        <position position="96"/>
    </location>
</feature>
<feature type="modified residue" description="Phosphoserine" evidence="1">
    <location>
        <position position="98"/>
    </location>
</feature>
<feature type="modified residue" description="Phosphoserine" evidence="1">
    <location>
        <position position="105"/>
    </location>
</feature>
<dbReference type="EMBL" id="AB056417">
    <property type="protein sequence ID" value="BAB33075.1"/>
    <property type="molecule type" value="mRNA"/>
</dbReference>
<dbReference type="STRING" id="9541.ENSMFAP00000023497"/>
<dbReference type="Proteomes" id="UP000233100">
    <property type="component" value="Unplaced"/>
</dbReference>
<dbReference type="InterPro" id="IPR029339">
    <property type="entry name" value="FAM219"/>
</dbReference>
<dbReference type="PANTHER" id="PTHR31281">
    <property type="entry name" value="PROTEIN FAM219A"/>
    <property type="match status" value="1"/>
</dbReference>
<dbReference type="PANTHER" id="PTHR31281:SF0">
    <property type="entry name" value="PROTEIN FAM219A"/>
    <property type="match status" value="1"/>
</dbReference>
<dbReference type="Pfam" id="PF15260">
    <property type="entry name" value="FAM219A"/>
    <property type="match status" value="1"/>
</dbReference>
<comment type="similarity">
    <text evidence="4">Belongs to the FAM219 family.</text>
</comment>
<keyword id="KW-0007">Acetylation</keyword>
<keyword id="KW-0597">Phosphoprotein</keyword>
<keyword id="KW-1185">Reference proteome</keyword>
<accession>Q9BGQ5</accession>
<reference key="1">
    <citation type="submission" date="2001-02" db="EMBL/GenBank/DDBJ databases">
        <title>Isolation of full-length cDNA clones from macaque brain cDNA libraries.</title>
        <authorList>
            <person name="Osada N."/>
            <person name="Hida M."/>
            <person name="Kusuda J."/>
            <person name="Tanuma R."/>
            <person name="Iseki K."/>
            <person name="Hirai M."/>
            <person name="Terao K."/>
            <person name="Suzuki Y."/>
            <person name="Sugano S."/>
            <person name="Hashimoto K."/>
        </authorList>
    </citation>
    <scope>NUCLEOTIDE SEQUENCE [LARGE SCALE MRNA]</scope>
    <source>
        <tissue>Frontal cortex</tissue>
    </source>
</reference>
<proteinExistence type="evidence at transcript level"/>
<organism>
    <name type="scientific">Macaca fascicularis</name>
    <name type="common">Crab-eating macaque</name>
    <name type="synonym">Cynomolgus monkey</name>
    <dbReference type="NCBI Taxonomy" id="9541"/>
    <lineage>
        <taxon>Eukaryota</taxon>
        <taxon>Metazoa</taxon>
        <taxon>Chordata</taxon>
        <taxon>Craniata</taxon>
        <taxon>Vertebrata</taxon>
        <taxon>Euteleostomi</taxon>
        <taxon>Mammalia</taxon>
        <taxon>Eutheria</taxon>
        <taxon>Euarchontoglires</taxon>
        <taxon>Primates</taxon>
        <taxon>Haplorrhini</taxon>
        <taxon>Catarrhini</taxon>
        <taxon>Cercopithecidae</taxon>
        <taxon>Cercopithecinae</taxon>
        <taxon>Macaca</taxon>
    </lineage>
</organism>